<dbReference type="EC" id="3.6.4.-" evidence="1"/>
<dbReference type="EMBL" id="CP000439">
    <property type="protein sequence ID" value="ABK89779.1"/>
    <property type="molecule type" value="Genomic_DNA"/>
</dbReference>
<dbReference type="RefSeq" id="WP_003016007.1">
    <property type="nucleotide sequence ID" value="NZ_CP009633.1"/>
</dbReference>
<dbReference type="SMR" id="A0Q6B4"/>
<dbReference type="KEGG" id="ftn:FTN_0891"/>
<dbReference type="KEGG" id="ftx:AW25_1127"/>
<dbReference type="BioCyc" id="FTUL401614:G1G75-929-MONOMER"/>
<dbReference type="Proteomes" id="UP000000762">
    <property type="component" value="Chromosome"/>
</dbReference>
<dbReference type="GO" id="GO:0005737">
    <property type="term" value="C:cytoplasm"/>
    <property type="evidence" value="ECO:0007669"/>
    <property type="project" value="UniProtKB-SubCell"/>
</dbReference>
<dbReference type="GO" id="GO:0048476">
    <property type="term" value="C:Holliday junction resolvase complex"/>
    <property type="evidence" value="ECO:0007669"/>
    <property type="project" value="UniProtKB-UniRule"/>
</dbReference>
<dbReference type="GO" id="GO:0005524">
    <property type="term" value="F:ATP binding"/>
    <property type="evidence" value="ECO:0007669"/>
    <property type="project" value="UniProtKB-UniRule"/>
</dbReference>
<dbReference type="GO" id="GO:0016887">
    <property type="term" value="F:ATP hydrolysis activity"/>
    <property type="evidence" value="ECO:0007669"/>
    <property type="project" value="InterPro"/>
</dbReference>
<dbReference type="GO" id="GO:0000400">
    <property type="term" value="F:four-way junction DNA binding"/>
    <property type="evidence" value="ECO:0007669"/>
    <property type="project" value="UniProtKB-UniRule"/>
</dbReference>
<dbReference type="GO" id="GO:0009378">
    <property type="term" value="F:four-way junction helicase activity"/>
    <property type="evidence" value="ECO:0007669"/>
    <property type="project" value="InterPro"/>
</dbReference>
<dbReference type="GO" id="GO:0006310">
    <property type="term" value="P:DNA recombination"/>
    <property type="evidence" value="ECO:0007669"/>
    <property type="project" value="UniProtKB-UniRule"/>
</dbReference>
<dbReference type="GO" id="GO:0006281">
    <property type="term" value="P:DNA repair"/>
    <property type="evidence" value="ECO:0007669"/>
    <property type="project" value="UniProtKB-UniRule"/>
</dbReference>
<dbReference type="CDD" id="cd00009">
    <property type="entry name" value="AAA"/>
    <property type="match status" value="1"/>
</dbReference>
<dbReference type="FunFam" id="1.10.8.60:FF:000023">
    <property type="entry name" value="Holliday junction ATP-dependent DNA helicase RuvB"/>
    <property type="match status" value="1"/>
</dbReference>
<dbReference type="FunFam" id="3.40.50.300:FF:000073">
    <property type="entry name" value="Holliday junction ATP-dependent DNA helicase RuvB"/>
    <property type="match status" value="1"/>
</dbReference>
<dbReference type="Gene3D" id="1.10.8.60">
    <property type="match status" value="1"/>
</dbReference>
<dbReference type="Gene3D" id="3.40.50.300">
    <property type="entry name" value="P-loop containing nucleotide triphosphate hydrolases"/>
    <property type="match status" value="1"/>
</dbReference>
<dbReference type="Gene3D" id="1.10.10.10">
    <property type="entry name" value="Winged helix-like DNA-binding domain superfamily/Winged helix DNA-binding domain"/>
    <property type="match status" value="1"/>
</dbReference>
<dbReference type="HAMAP" id="MF_00016">
    <property type="entry name" value="DNA_HJ_migration_RuvB"/>
    <property type="match status" value="1"/>
</dbReference>
<dbReference type="InterPro" id="IPR003593">
    <property type="entry name" value="AAA+_ATPase"/>
</dbReference>
<dbReference type="InterPro" id="IPR041445">
    <property type="entry name" value="AAA_lid_4"/>
</dbReference>
<dbReference type="InterPro" id="IPR004605">
    <property type="entry name" value="DNA_helicase_Holl-junc_RuvB"/>
</dbReference>
<dbReference type="InterPro" id="IPR027417">
    <property type="entry name" value="P-loop_NTPase"/>
</dbReference>
<dbReference type="InterPro" id="IPR008824">
    <property type="entry name" value="RuvB-like_N"/>
</dbReference>
<dbReference type="InterPro" id="IPR008823">
    <property type="entry name" value="RuvB_C"/>
</dbReference>
<dbReference type="InterPro" id="IPR036388">
    <property type="entry name" value="WH-like_DNA-bd_sf"/>
</dbReference>
<dbReference type="InterPro" id="IPR036390">
    <property type="entry name" value="WH_DNA-bd_sf"/>
</dbReference>
<dbReference type="NCBIfam" id="NF000868">
    <property type="entry name" value="PRK00080.1"/>
    <property type="match status" value="1"/>
</dbReference>
<dbReference type="NCBIfam" id="TIGR00635">
    <property type="entry name" value="ruvB"/>
    <property type="match status" value="1"/>
</dbReference>
<dbReference type="PANTHER" id="PTHR42848">
    <property type="match status" value="1"/>
</dbReference>
<dbReference type="PANTHER" id="PTHR42848:SF1">
    <property type="entry name" value="HOLLIDAY JUNCTION BRANCH MIGRATION COMPLEX SUBUNIT RUVB"/>
    <property type="match status" value="1"/>
</dbReference>
<dbReference type="Pfam" id="PF17864">
    <property type="entry name" value="AAA_lid_4"/>
    <property type="match status" value="1"/>
</dbReference>
<dbReference type="Pfam" id="PF05491">
    <property type="entry name" value="RuvB_C"/>
    <property type="match status" value="1"/>
</dbReference>
<dbReference type="Pfam" id="PF05496">
    <property type="entry name" value="RuvB_N"/>
    <property type="match status" value="1"/>
</dbReference>
<dbReference type="SMART" id="SM00382">
    <property type="entry name" value="AAA"/>
    <property type="match status" value="1"/>
</dbReference>
<dbReference type="SUPFAM" id="SSF52540">
    <property type="entry name" value="P-loop containing nucleoside triphosphate hydrolases"/>
    <property type="match status" value="1"/>
</dbReference>
<dbReference type="SUPFAM" id="SSF46785">
    <property type="entry name" value="Winged helix' DNA-binding domain"/>
    <property type="match status" value="1"/>
</dbReference>
<reference key="1">
    <citation type="journal article" date="2007" name="Genome Biol.">
        <title>Comparison of Francisella tularensis genomes reveals evolutionary events associated with the emergence of human pathogenic strains.</title>
        <authorList>
            <person name="Rohmer L."/>
            <person name="Fong C."/>
            <person name="Abmayr S."/>
            <person name="Wasnick M."/>
            <person name="Larson Freeman T.J."/>
            <person name="Radey M."/>
            <person name="Guina T."/>
            <person name="Svensson K."/>
            <person name="Hayden H.S."/>
            <person name="Jacobs M."/>
            <person name="Gallagher L.A."/>
            <person name="Manoil C."/>
            <person name="Ernst R.K."/>
            <person name="Drees B."/>
            <person name="Buckley D."/>
            <person name="Haugen E."/>
            <person name="Bovee D."/>
            <person name="Zhou Y."/>
            <person name="Chang J."/>
            <person name="Levy R."/>
            <person name="Lim R."/>
            <person name="Gillett W."/>
            <person name="Guenthener D."/>
            <person name="Kang A."/>
            <person name="Shaffer S.A."/>
            <person name="Taylor G."/>
            <person name="Chen J."/>
            <person name="Gallis B."/>
            <person name="D'Argenio D.A."/>
            <person name="Forsman M."/>
            <person name="Olson M.V."/>
            <person name="Goodlett D.R."/>
            <person name="Kaul R."/>
            <person name="Miller S.I."/>
            <person name="Brittnacher M.J."/>
        </authorList>
    </citation>
    <scope>NUCLEOTIDE SEQUENCE [LARGE SCALE GENOMIC DNA]</scope>
    <source>
        <strain>U112</strain>
    </source>
</reference>
<accession>A0Q6B4</accession>
<keyword id="KW-0067">ATP-binding</keyword>
<keyword id="KW-0963">Cytoplasm</keyword>
<keyword id="KW-0227">DNA damage</keyword>
<keyword id="KW-0233">DNA recombination</keyword>
<keyword id="KW-0234">DNA repair</keyword>
<keyword id="KW-0238">DNA-binding</keyword>
<keyword id="KW-0378">Hydrolase</keyword>
<keyword id="KW-0547">Nucleotide-binding</keyword>
<gene>
    <name evidence="1" type="primary">ruvB</name>
    <name type="ordered locus">FTN_0891</name>
</gene>
<protein>
    <recommendedName>
        <fullName evidence="1">Holliday junction branch migration complex subunit RuvB</fullName>
        <ecNumber evidence="1">3.6.4.-</ecNumber>
    </recommendedName>
</protein>
<sequence length="348" mass="38627">MIETDRIISANTAQTNDENVIDRAIRPKTLAEYEGQPAVREQMEIFIQAAKARKDALDHTLIFGPPGLGKTTLSNIIANEMGVELKQTSGPVLEKAGDLAALLTNLEENDVLFIDEIHRLSPVVEEILYPAMEDYQLDIMIGEGPAARSIKIDLPPFTLVGATTRAGLLTSPLRDRFGIIQRLEFYSIDDLSKIVYRSAKLLNLDITTDGAMEIAKRSRGTPRIANRLLRRVRDYAQVKGSGVICFEIADKALSMLKVDPVGFDHMDHRYLLTLMEKFAGGPVGLDTMSAALSEEKGTIEDVIEPYLIQQGYIMRTARGRIATLLAYNHFKLKIPDNLSADQQQTLSI</sequence>
<organism>
    <name type="scientific">Francisella tularensis subsp. novicida (strain U112)</name>
    <dbReference type="NCBI Taxonomy" id="401614"/>
    <lineage>
        <taxon>Bacteria</taxon>
        <taxon>Pseudomonadati</taxon>
        <taxon>Pseudomonadota</taxon>
        <taxon>Gammaproteobacteria</taxon>
        <taxon>Thiotrichales</taxon>
        <taxon>Francisellaceae</taxon>
        <taxon>Francisella</taxon>
    </lineage>
</organism>
<evidence type="ECO:0000255" key="1">
    <source>
        <dbReference type="HAMAP-Rule" id="MF_00016"/>
    </source>
</evidence>
<feature type="chain" id="PRO_1000001409" description="Holliday junction branch migration complex subunit RuvB">
    <location>
        <begin position="1"/>
        <end position="348"/>
    </location>
</feature>
<feature type="region of interest" description="Large ATPase domain (RuvB-L)" evidence="1">
    <location>
        <begin position="4"/>
        <end position="186"/>
    </location>
</feature>
<feature type="region of interest" description="Small ATPAse domain (RuvB-S)" evidence="1">
    <location>
        <begin position="187"/>
        <end position="257"/>
    </location>
</feature>
<feature type="region of interest" description="Head domain (RuvB-H)" evidence="1">
    <location>
        <begin position="260"/>
        <end position="348"/>
    </location>
</feature>
<feature type="binding site" evidence="1">
    <location>
        <position position="25"/>
    </location>
    <ligand>
        <name>ATP</name>
        <dbReference type="ChEBI" id="CHEBI:30616"/>
    </ligand>
</feature>
<feature type="binding site" evidence="1">
    <location>
        <position position="26"/>
    </location>
    <ligand>
        <name>ATP</name>
        <dbReference type="ChEBI" id="CHEBI:30616"/>
    </ligand>
</feature>
<feature type="binding site" evidence="1">
    <location>
        <position position="67"/>
    </location>
    <ligand>
        <name>ATP</name>
        <dbReference type="ChEBI" id="CHEBI:30616"/>
    </ligand>
</feature>
<feature type="binding site" evidence="1">
    <location>
        <position position="70"/>
    </location>
    <ligand>
        <name>ATP</name>
        <dbReference type="ChEBI" id="CHEBI:30616"/>
    </ligand>
</feature>
<feature type="binding site" evidence="1">
    <location>
        <position position="71"/>
    </location>
    <ligand>
        <name>ATP</name>
        <dbReference type="ChEBI" id="CHEBI:30616"/>
    </ligand>
</feature>
<feature type="binding site" evidence="1">
    <location>
        <position position="71"/>
    </location>
    <ligand>
        <name>Mg(2+)</name>
        <dbReference type="ChEBI" id="CHEBI:18420"/>
    </ligand>
</feature>
<feature type="binding site" evidence="1">
    <location>
        <position position="72"/>
    </location>
    <ligand>
        <name>ATP</name>
        <dbReference type="ChEBI" id="CHEBI:30616"/>
    </ligand>
</feature>
<feature type="binding site" evidence="1">
    <location>
        <begin position="133"/>
        <end position="135"/>
    </location>
    <ligand>
        <name>ATP</name>
        <dbReference type="ChEBI" id="CHEBI:30616"/>
    </ligand>
</feature>
<feature type="binding site" evidence="1">
    <location>
        <position position="176"/>
    </location>
    <ligand>
        <name>ATP</name>
        <dbReference type="ChEBI" id="CHEBI:30616"/>
    </ligand>
</feature>
<feature type="binding site" evidence="1">
    <location>
        <position position="186"/>
    </location>
    <ligand>
        <name>ATP</name>
        <dbReference type="ChEBI" id="CHEBI:30616"/>
    </ligand>
</feature>
<feature type="binding site" evidence="1">
    <location>
        <position position="223"/>
    </location>
    <ligand>
        <name>ATP</name>
        <dbReference type="ChEBI" id="CHEBI:30616"/>
    </ligand>
</feature>
<feature type="binding site" evidence="1">
    <location>
        <position position="315"/>
    </location>
    <ligand>
        <name>DNA</name>
        <dbReference type="ChEBI" id="CHEBI:16991"/>
    </ligand>
</feature>
<feature type="binding site" evidence="1">
    <location>
        <position position="320"/>
    </location>
    <ligand>
        <name>DNA</name>
        <dbReference type="ChEBI" id="CHEBI:16991"/>
    </ligand>
</feature>
<comment type="function">
    <text evidence="1">The RuvA-RuvB-RuvC complex processes Holliday junction (HJ) DNA during genetic recombination and DNA repair, while the RuvA-RuvB complex plays an important role in the rescue of blocked DNA replication forks via replication fork reversal (RFR). RuvA specifically binds to HJ cruciform DNA, conferring on it an open structure. The RuvB hexamer acts as an ATP-dependent pump, pulling dsDNA into and through the RuvAB complex. RuvB forms 2 homohexamers on either side of HJ DNA bound by 1 or 2 RuvA tetramers; 4 subunits per hexamer contact DNA at a time. Coordinated motions by a converter formed by DNA-disengaged RuvB subunits stimulates ATP hydrolysis and nucleotide exchange. Immobilization of the converter enables RuvB to convert the ATP-contained energy into a lever motion, pulling 2 nucleotides of DNA out of the RuvA tetramer per ATP hydrolyzed, thus driving DNA branch migration. The RuvB motors rotate together with the DNA substrate, which together with the progressing nucleotide cycle form the mechanistic basis for DNA recombination by continuous HJ branch migration. Branch migration allows RuvC to scan DNA until it finds its consensus sequence, where it cleaves and resolves cruciform DNA.</text>
</comment>
<comment type="catalytic activity">
    <reaction evidence="1">
        <text>ATP + H2O = ADP + phosphate + H(+)</text>
        <dbReference type="Rhea" id="RHEA:13065"/>
        <dbReference type="ChEBI" id="CHEBI:15377"/>
        <dbReference type="ChEBI" id="CHEBI:15378"/>
        <dbReference type="ChEBI" id="CHEBI:30616"/>
        <dbReference type="ChEBI" id="CHEBI:43474"/>
        <dbReference type="ChEBI" id="CHEBI:456216"/>
    </reaction>
</comment>
<comment type="subunit">
    <text evidence="1">Homohexamer. Forms an RuvA(8)-RuvB(12)-Holliday junction (HJ) complex. HJ DNA is sandwiched between 2 RuvA tetramers; dsDNA enters through RuvA and exits via RuvB. An RuvB hexamer assembles on each DNA strand where it exits the tetramer. Each RuvB hexamer is contacted by two RuvA subunits (via domain III) on 2 adjacent RuvB subunits; this complex drives branch migration. In the full resolvosome a probable DNA-RuvA(4)-RuvB(12)-RuvC(2) complex forms which resolves the HJ.</text>
</comment>
<comment type="subcellular location">
    <subcellularLocation>
        <location evidence="1">Cytoplasm</location>
    </subcellularLocation>
</comment>
<comment type="domain">
    <text evidence="1">Has 3 domains, the large (RuvB-L) and small ATPase (RuvB-S) domains and the C-terminal head (RuvB-H) domain. The head domain binds DNA, while the ATPase domains jointly bind ATP, ADP or are empty depending on the state of the subunit in the translocation cycle. During a single DNA translocation step the structure of each domain remains the same, but their relative positions change.</text>
</comment>
<comment type="similarity">
    <text evidence="1">Belongs to the RuvB family.</text>
</comment>
<name>RUVB_FRATN</name>
<proteinExistence type="inferred from homology"/>